<proteinExistence type="evidence at protein level"/>
<protein>
    <recommendedName>
        <fullName>Glycylpeptide N-tetradecanoyltransferase 1</fullName>
        <ecNumber evidence="2">2.3.1.97</ecNumber>
    </recommendedName>
    <alternativeName>
        <fullName>Myristoyl-CoA:protein N-myristoyltransferase 1</fullName>
        <shortName>NMT 1</shortName>
        <shortName>Type I N-myristoyltransferase</shortName>
    </alternativeName>
    <alternativeName>
        <fullName>Peptide N-myristoyltransferase 1</fullName>
    </alternativeName>
</protein>
<comment type="function">
    <text evidence="2">Adds a myristoyl group to the N-terminal glycine residue of certain cellular and viral proteins. Also able to mediate N-terminal lysine myristoylation of proteins: catalyzes myristoylation of ARF6 on both 'Gly-2' and 'Lys-3'. Lysine myristoylation is required to maintain ARF6 on membranes during the GTPase cycle.</text>
</comment>
<comment type="catalytic activity">
    <reaction evidence="2">
        <text>N-terminal glycyl-[protein] + tetradecanoyl-CoA = N-tetradecanoylglycyl-[protein] + CoA + H(+)</text>
        <dbReference type="Rhea" id="RHEA:15521"/>
        <dbReference type="Rhea" id="RHEA-COMP:12666"/>
        <dbReference type="Rhea" id="RHEA-COMP:12667"/>
        <dbReference type="ChEBI" id="CHEBI:15378"/>
        <dbReference type="ChEBI" id="CHEBI:57287"/>
        <dbReference type="ChEBI" id="CHEBI:57385"/>
        <dbReference type="ChEBI" id="CHEBI:64723"/>
        <dbReference type="ChEBI" id="CHEBI:133050"/>
        <dbReference type="EC" id="2.3.1.97"/>
    </reaction>
</comment>
<comment type="catalytic activity">
    <reaction evidence="2">
        <text>N-terminal glycyl-L-lysyl-[protein] + tetradecanoyl-CoA = N-terminal glycyl-(N(6)-tetradecanoyl)-L-lysyl-[protein] + CoA + H(+)</text>
        <dbReference type="Rhea" id="RHEA:70671"/>
        <dbReference type="Rhea" id="RHEA-COMP:17947"/>
        <dbReference type="Rhea" id="RHEA-COMP:17948"/>
        <dbReference type="ChEBI" id="CHEBI:15378"/>
        <dbReference type="ChEBI" id="CHEBI:57287"/>
        <dbReference type="ChEBI" id="CHEBI:57385"/>
        <dbReference type="ChEBI" id="CHEBI:189855"/>
        <dbReference type="ChEBI" id="CHEBI:189856"/>
    </reaction>
    <physiologicalReaction direction="left-to-right" evidence="2">
        <dbReference type="Rhea" id="RHEA:70672"/>
    </physiologicalReaction>
</comment>
<comment type="subcellular location">
    <subcellularLocation>
        <location evidence="2">Cytoplasm</location>
    </subcellularLocation>
    <subcellularLocation>
        <location evidence="2">Cytoplasm</location>
        <location evidence="2">Cytosol</location>
    </subcellularLocation>
    <subcellularLocation>
        <location evidence="2">Membrane</location>
        <topology evidence="2">Peripheral membrane protein</topology>
    </subcellularLocation>
    <text evidence="2">Copurifies with ribosomes.</text>
</comment>
<comment type="similarity">
    <text evidence="4">Belongs to the NMT family.</text>
</comment>
<keyword id="KW-0012">Acyltransferase</keyword>
<keyword id="KW-0963">Cytoplasm</keyword>
<keyword id="KW-0472">Membrane</keyword>
<keyword id="KW-0597">Phosphoprotein</keyword>
<keyword id="KW-1185">Reference proteome</keyword>
<keyword id="KW-0808">Transferase</keyword>
<gene>
    <name type="primary">Nmt1</name>
</gene>
<sequence>MADESETAVKLPAPSLPLMMEGNGNGHEHCSDCENEEDISHNRGGLSPANDTGAKKKKKKQKKKKEKGNDMDSTQDQPVKMNSLPAERIQEIQKAIELFSVGQGPAKTMEEASKRSYQFWDTQPVPKLGEVVNTHGPVEPDKDNIRQEPYTLPQGFTWDALDLGDRGVLKELYTLLNENYVEDDDNMFRFDYSPEFLLWALRPPGWLPQWHCGVRVVSSRKLVGFISAIPANIHIYDTEKKMVEINFLCVHKKLRSKRVAPVLIREITRRVHLEGIFQAVYTAGVVLPKPVGTCRYWHRSLNPRKLIEVKFSHLSRNMTMQRTMKLYRLPETPKTAGLRPMEKKDIPVVHQLLSRYLKQFNLTPVMNQEEVEHWFYPQENIIDTFVVENANGEVTDFLSFYTLPSTIMNHPTHKSLKAAYSFYNVHTQTPLLDLMSDALVLAKMKGFDVFNALDLMENKTFLEKLKFGIGDGNLQYYLYNWKCPSMGAEKVGLVLQ</sequence>
<reference key="1">
    <citation type="submission" date="2002-06" db="EMBL/GenBank/DDBJ databases">
        <title>Cloning of rat liver NMT1.</title>
        <authorList>
            <person name="Daval S."/>
            <person name="Jan S."/>
            <person name="Guillou H."/>
            <person name="Legrand P."/>
            <person name="Rioux V."/>
        </authorList>
    </citation>
    <scope>NUCLEOTIDE SEQUENCE [MRNA]</scope>
    <source>
        <strain>Sprague-Dawley</strain>
        <tissue>Liver</tissue>
    </source>
</reference>
<reference key="2">
    <citation type="journal article" date="2004" name="Genome Res.">
        <title>The status, quality, and expansion of the NIH full-length cDNA project: the Mammalian Gene Collection (MGC).</title>
        <authorList>
            <consortium name="The MGC Project Team"/>
        </authorList>
    </citation>
    <scope>NUCLEOTIDE SEQUENCE [LARGE SCALE MRNA]</scope>
    <source>
        <tissue>Testis</tissue>
    </source>
</reference>
<reference key="3">
    <citation type="journal article" date="2012" name="Nat. Commun.">
        <title>Quantitative maps of protein phosphorylation sites across 14 different rat organs and tissues.</title>
        <authorList>
            <person name="Lundby A."/>
            <person name="Secher A."/>
            <person name="Lage K."/>
            <person name="Nordsborg N.B."/>
            <person name="Dmytriyev A."/>
            <person name="Lundby C."/>
            <person name="Olsen J.V."/>
        </authorList>
    </citation>
    <scope>PHOSPHORYLATION [LARGE SCALE ANALYSIS] AT SER-47</scope>
    <scope>IDENTIFICATION BY MASS SPECTROMETRY [LARGE SCALE ANALYSIS]</scope>
</reference>
<name>NMT1_RAT</name>
<dbReference type="EC" id="2.3.1.97" evidence="2"/>
<dbReference type="EMBL" id="AJ492222">
    <property type="protein sequence ID" value="CAD37349.1"/>
    <property type="molecule type" value="mRNA"/>
</dbReference>
<dbReference type="EMBL" id="BC097277">
    <property type="protein sequence ID" value="AAH97277.1"/>
    <property type="molecule type" value="mRNA"/>
</dbReference>
<dbReference type="RefSeq" id="NP_683689.1">
    <property type="nucleotide sequence ID" value="NM_148891.2"/>
</dbReference>
<dbReference type="SMR" id="Q8K1Q0"/>
<dbReference type="FunCoup" id="Q8K1Q0">
    <property type="interactions" value="4217"/>
</dbReference>
<dbReference type="IntAct" id="Q8K1Q0">
    <property type="interactions" value="4"/>
</dbReference>
<dbReference type="STRING" id="10116.ENSRNOP00000004046"/>
<dbReference type="iPTMnet" id="Q8K1Q0"/>
<dbReference type="PhosphoSitePlus" id="Q8K1Q0"/>
<dbReference type="jPOST" id="Q8K1Q0"/>
<dbReference type="PaxDb" id="10116-ENSRNOP00000004046"/>
<dbReference type="Ensembl" id="ENSRNOT00000004046.7">
    <property type="protein sequence ID" value="ENSRNOP00000004046.5"/>
    <property type="gene ID" value="ENSRNOG00000002989.7"/>
</dbReference>
<dbReference type="GeneID" id="259274"/>
<dbReference type="KEGG" id="rno:259274"/>
<dbReference type="UCSC" id="RGD:628642">
    <property type="organism name" value="rat"/>
</dbReference>
<dbReference type="AGR" id="RGD:628642"/>
<dbReference type="CTD" id="4836"/>
<dbReference type="RGD" id="628642">
    <property type="gene designation" value="Nmt1"/>
</dbReference>
<dbReference type="eggNOG" id="KOG2779">
    <property type="taxonomic scope" value="Eukaryota"/>
</dbReference>
<dbReference type="GeneTree" id="ENSGT00390000017837"/>
<dbReference type="HOGENOM" id="CLU_022882_1_0_1"/>
<dbReference type="InParanoid" id="Q8K1Q0"/>
<dbReference type="OrthoDB" id="60315at2759"/>
<dbReference type="PhylomeDB" id="Q8K1Q0"/>
<dbReference type="TreeFam" id="TF300701"/>
<dbReference type="BRENDA" id="2.3.1.97">
    <property type="organism ID" value="5301"/>
</dbReference>
<dbReference type="Reactome" id="R-RNO-2514859">
    <property type="pathway name" value="Inactivation, recovery and regulation of the phototransduction cascade"/>
</dbReference>
<dbReference type="Reactome" id="R-RNO-75108">
    <property type="pathway name" value="Activation, myristolyation of BID and translocation to mitochondria"/>
</dbReference>
<dbReference type="PRO" id="PR:Q8K1Q0"/>
<dbReference type="Proteomes" id="UP000002494">
    <property type="component" value="Chromosome 10"/>
</dbReference>
<dbReference type="Bgee" id="ENSRNOG00000002989">
    <property type="expression patterns" value="Expressed in heart and 20 other cell types or tissues"/>
</dbReference>
<dbReference type="GO" id="GO:0005737">
    <property type="term" value="C:cytoplasm"/>
    <property type="evidence" value="ECO:0000250"/>
    <property type="project" value="UniProtKB"/>
</dbReference>
<dbReference type="GO" id="GO:0005829">
    <property type="term" value="C:cytosol"/>
    <property type="evidence" value="ECO:0000318"/>
    <property type="project" value="GO_Central"/>
</dbReference>
<dbReference type="GO" id="GO:0005886">
    <property type="term" value="C:plasma membrane"/>
    <property type="evidence" value="ECO:0000266"/>
    <property type="project" value="RGD"/>
</dbReference>
<dbReference type="GO" id="GO:0004379">
    <property type="term" value="F:glycylpeptide N-tetradecanoyltransferase activity"/>
    <property type="evidence" value="ECO:0000250"/>
    <property type="project" value="UniProtKB"/>
</dbReference>
<dbReference type="GO" id="GO:0019107">
    <property type="term" value="F:myristoyltransferase activity"/>
    <property type="evidence" value="ECO:0000314"/>
    <property type="project" value="RGD"/>
</dbReference>
<dbReference type="GO" id="GO:0018030">
    <property type="term" value="F:peptidyl-lysine N6-myristoyltransferase activity"/>
    <property type="evidence" value="ECO:0000250"/>
    <property type="project" value="UniProtKB"/>
</dbReference>
<dbReference type="GO" id="GO:0001701">
    <property type="term" value="P:in utero embryonic development"/>
    <property type="evidence" value="ECO:0000266"/>
    <property type="project" value="RGD"/>
</dbReference>
<dbReference type="GO" id="GO:0042180">
    <property type="term" value="P:ketone metabolic process"/>
    <property type="evidence" value="ECO:0000266"/>
    <property type="project" value="RGD"/>
</dbReference>
<dbReference type="GO" id="GO:0018008">
    <property type="term" value="P:N-terminal peptidyl-glycine N-myristoylation"/>
    <property type="evidence" value="ECO:0000250"/>
    <property type="project" value="UniProtKB"/>
</dbReference>
<dbReference type="GO" id="GO:0072657">
    <property type="term" value="P:protein localization to membrane"/>
    <property type="evidence" value="ECO:0000266"/>
    <property type="project" value="RGD"/>
</dbReference>
<dbReference type="CDD" id="cd04301">
    <property type="entry name" value="NAT_SF"/>
    <property type="match status" value="1"/>
</dbReference>
<dbReference type="FunFam" id="3.40.630.170:FF:000001">
    <property type="entry name" value="Glycylpeptide N-tetradecanoyltransferase"/>
    <property type="match status" value="1"/>
</dbReference>
<dbReference type="Gene3D" id="3.40.630.170">
    <property type="match status" value="1"/>
</dbReference>
<dbReference type="InterPro" id="IPR016181">
    <property type="entry name" value="Acyl_CoA_acyltransferase"/>
</dbReference>
<dbReference type="InterPro" id="IPR000903">
    <property type="entry name" value="NMT"/>
</dbReference>
<dbReference type="InterPro" id="IPR022677">
    <property type="entry name" value="NMT_C"/>
</dbReference>
<dbReference type="InterPro" id="IPR022678">
    <property type="entry name" value="NMT_CS"/>
</dbReference>
<dbReference type="InterPro" id="IPR022676">
    <property type="entry name" value="NMT_N"/>
</dbReference>
<dbReference type="PANTHER" id="PTHR11377:SF7">
    <property type="entry name" value="GLYCYLPEPTIDE N-TETRADECANOYLTRANSFERASE 1"/>
    <property type="match status" value="1"/>
</dbReference>
<dbReference type="PANTHER" id="PTHR11377">
    <property type="entry name" value="N-MYRISTOYL TRANSFERASE"/>
    <property type="match status" value="1"/>
</dbReference>
<dbReference type="Pfam" id="PF01233">
    <property type="entry name" value="NMT"/>
    <property type="match status" value="1"/>
</dbReference>
<dbReference type="Pfam" id="PF02799">
    <property type="entry name" value="NMT_C"/>
    <property type="match status" value="1"/>
</dbReference>
<dbReference type="PIRSF" id="PIRSF015892">
    <property type="entry name" value="N-myristl_transf"/>
    <property type="match status" value="1"/>
</dbReference>
<dbReference type="SUPFAM" id="SSF55729">
    <property type="entry name" value="Acyl-CoA N-acyltransferases (Nat)"/>
    <property type="match status" value="2"/>
</dbReference>
<dbReference type="PROSITE" id="PS00975">
    <property type="entry name" value="NMT_1"/>
    <property type="match status" value="1"/>
</dbReference>
<dbReference type="PROSITE" id="PS00976">
    <property type="entry name" value="NMT_2"/>
    <property type="match status" value="1"/>
</dbReference>
<organism>
    <name type="scientific">Rattus norvegicus</name>
    <name type="common">Rat</name>
    <dbReference type="NCBI Taxonomy" id="10116"/>
    <lineage>
        <taxon>Eukaryota</taxon>
        <taxon>Metazoa</taxon>
        <taxon>Chordata</taxon>
        <taxon>Craniata</taxon>
        <taxon>Vertebrata</taxon>
        <taxon>Euteleostomi</taxon>
        <taxon>Mammalia</taxon>
        <taxon>Eutheria</taxon>
        <taxon>Euarchontoglires</taxon>
        <taxon>Glires</taxon>
        <taxon>Rodentia</taxon>
        <taxon>Myomorpha</taxon>
        <taxon>Muroidea</taxon>
        <taxon>Muridae</taxon>
        <taxon>Murinae</taxon>
        <taxon>Rattus</taxon>
    </lineage>
</organism>
<accession>Q8K1Q0</accession>
<evidence type="ECO:0000250" key="1">
    <source>
        <dbReference type="UniProtKB" id="O70310"/>
    </source>
</evidence>
<evidence type="ECO:0000250" key="2">
    <source>
        <dbReference type="UniProtKB" id="P30419"/>
    </source>
</evidence>
<evidence type="ECO:0000256" key="3">
    <source>
        <dbReference type="SAM" id="MobiDB-lite"/>
    </source>
</evidence>
<evidence type="ECO:0000305" key="4"/>
<evidence type="ECO:0007744" key="5">
    <source>
    </source>
</evidence>
<feature type="chain" id="PRO_0000064224" description="Glycylpeptide N-tetradecanoyltransferase 1">
    <location>
        <begin position="1"/>
        <end position="496"/>
    </location>
</feature>
<feature type="region of interest" description="Disordered" evidence="3">
    <location>
        <begin position="1"/>
        <end position="81"/>
    </location>
</feature>
<feature type="compositionally biased region" description="Basic residues" evidence="3">
    <location>
        <begin position="55"/>
        <end position="66"/>
    </location>
</feature>
<feature type="binding site" evidence="2">
    <location>
        <position position="118"/>
    </location>
    <ligand>
        <name>tetradecanoyl-CoA</name>
        <dbReference type="ChEBI" id="CHEBI:57385"/>
    </ligand>
</feature>
<feature type="binding site" evidence="2">
    <location>
        <position position="119"/>
    </location>
    <ligand>
        <name>tetradecanoyl-CoA</name>
        <dbReference type="ChEBI" id="CHEBI:57385"/>
    </ligand>
</feature>
<feature type="binding site" evidence="2">
    <location>
        <position position="120"/>
    </location>
    <ligand>
        <name>tetradecanoyl-CoA</name>
        <dbReference type="ChEBI" id="CHEBI:57385"/>
    </ligand>
</feature>
<feature type="binding site" evidence="2">
    <location>
        <position position="247"/>
    </location>
    <ligand>
        <name>tetradecanoyl-CoA</name>
        <dbReference type="ChEBI" id="CHEBI:57385"/>
    </ligand>
</feature>
<feature type="binding site" evidence="2">
    <location>
        <position position="248"/>
    </location>
    <ligand>
        <name>tetradecanoyl-CoA</name>
        <dbReference type="ChEBI" id="CHEBI:57385"/>
    </ligand>
</feature>
<feature type="binding site" evidence="2">
    <location>
        <position position="249"/>
    </location>
    <ligand>
        <name>tetradecanoyl-CoA</name>
        <dbReference type="ChEBI" id="CHEBI:57385"/>
    </ligand>
</feature>
<feature type="binding site" evidence="2">
    <location>
        <position position="250"/>
    </location>
    <ligand>
        <name>tetradecanoyl-CoA</name>
        <dbReference type="ChEBI" id="CHEBI:57385"/>
    </ligand>
</feature>
<feature type="binding site" evidence="2">
    <location>
        <position position="256"/>
    </location>
    <ligand>
        <name>tetradecanoyl-CoA</name>
        <dbReference type="ChEBI" id="CHEBI:57385"/>
    </ligand>
</feature>
<feature type="binding site" evidence="2">
    <location>
        <position position="258"/>
    </location>
    <ligand>
        <name>tetradecanoyl-CoA</name>
        <dbReference type="ChEBI" id="CHEBI:57385"/>
    </ligand>
</feature>
<feature type="binding site" evidence="2">
    <location>
        <position position="259"/>
    </location>
    <ligand>
        <name>tetradecanoyl-CoA</name>
        <dbReference type="ChEBI" id="CHEBI:57385"/>
    </ligand>
</feature>
<feature type="binding site" evidence="2">
    <location>
        <position position="260"/>
    </location>
    <ligand>
        <name>tetradecanoyl-CoA</name>
        <dbReference type="ChEBI" id="CHEBI:57385"/>
    </ligand>
</feature>
<feature type="modified residue" description="Phosphoserine" evidence="1">
    <location>
        <position position="31"/>
    </location>
</feature>
<feature type="modified residue" description="Phosphoserine" evidence="5">
    <location>
        <position position="47"/>
    </location>
</feature>
<feature type="modified residue" description="Phosphoserine" evidence="2">
    <location>
        <position position="83"/>
    </location>
</feature>